<dbReference type="EMBL" id="CP000908">
    <property type="protein sequence ID" value="ABY28797.1"/>
    <property type="molecule type" value="Genomic_DNA"/>
</dbReference>
<dbReference type="RefSeq" id="WP_012252173.1">
    <property type="nucleotide sequence ID" value="NC_010172.1"/>
</dbReference>
<dbReference type="SMR" id="A9VZP1"/>
<dbReference type="KEGG" id="mex:Mext_0375"/>
<dbReference type="eggNOG" id="COG1489">
    <property type="taxonomic scope" value="Bacteria"/>
</dbReference>
<dbReference type="HOGENOM" id="CLU_052299_2_0_5"/>
<dbReference type="BioCyc" id="MEXT419610:MEXT_RS01860-MONOMER"/>
<dbReference type="GO" id="GO:0003677">
    <property type="term" value="F:DNA binding"/>
    <property type="evidence" value="ECO:0007669"/>
    <property type="project" value="InterPro"/>
</dbReference>
<dbReference type="CDD" id="cd22359">
    <property type="entry name" value="SfsA-like_bacterial"/>
    <property type="match status" value="1"/>
</dbReference>
<dbReference type="Gene3D" id="2.40.50.580">
    <property type="match status" value="1"/>
</dbReference>
<dbReference type="Gene3D" id="3.40.1350.60">
    <property type="match status" value="1"/>
</dbReference>
<dbReference type="HAMAP" id="MF_00095">
    <property type="entry name" value="SfsA"/>
    <property type="match status" value="1"/>
</dbReference>
<dbReference type="InterPro" id="IPR005224">
    <property type="entry name" value="SfsA"/>
</dbReference>
<dbReference type="InterPro" id="IPR040452">
    <property type="entry name" value="SfsA_C"/>
</dbReference>
<dbReference type="InterPro" id="IPR041465">
    <property type="entry name" value="SfsA_N"/>
</dbReference>
<dbReference type="NCBIfam" id="TIGR00230">
    <property type="entry name" value="sfsA"/>
    <property type="match status" value="1"/>
</dbReference>
<dbReference type="PANTHER" id="PTHR30545">
    <property type="entry name" value="SUGAR FERMENTATION STIMULATION PROTEIN A"/>
    <property type="match status" value="1"/>
</dbReference>
<dbReference type="PANTHER" id="PTHR30545:SF2">
    <property type="entry name" value="SUGAR FERMENTATION STIMULATION PROTEIN A"/>
    <property type="match status" value="1"/>
</dbReference>
<dbReference type="Pfam" id="PF03749">
    <property type="entry name" value="SfsA"/>
    <property type="match status" value="1"/>
</dbReference>
<dbReference type="Pfam" id="PF17746">
    <property type="entry name" value="SfsA_N"/>
    <property type="match status" value="1"/>
</dbReference>
<comment type="similarity">
    <text evidence="1">Belongs to the SfsA family.</text>
</comment>
<protein>
    <recommendedName>
        <fullName evidence="1">Sugar fermentation stimulation protein homolog</fullName>
    </recommendedName>
</protein>
<proteinExistence type="inferred from homology"/>
<evidence type="ECO:0000255" key="1">
    <source>
        <dbReference type="HAMAP-Rule" id="MF_00095"/>
    </source>
</evidence>
<feature type="chain" id="PRO_1000093576" description="Sugar fermentation stimulation protein homolog">
    <location>
        <begin position="1"/>
        <end position="248"/>
    </location>
</feature>
<reference key="1">
    <citation type="submission" date="2007-12" db="EMBL/GenBank/DDBJ databases">
        <title>Complete sequence of Methylobacterium extorquens PA1.</title>
        <authorList>
            <consortium name="US DOE Joint Genome Institute"/>
            <person name="Copeland A."/>
            <person name="Lucas S."/>
            <person name="Lapidus A."/>
            <person name="Barry K."/>
            <person name="Glavina del Rio T."/>
            <person name="Dalin E."/>
            <person name="Tice H."/>
            <person name="Pitluck S."/>
            <person name="Saunders E."/>
            <person name="Brettin T."/>
            <person name="Bruce D."/>
            <person name="Detter J.C."/>
            <person name="Han C."/>
            <person name="Schmutz J."/>
            <person name="Larimer F."/>
            <person name="Land M."/>
            <person name="Hauser L."/>
            <person name="Kyrpides N."/>
            <person name="Kim E."/>
            <person name="Marx C."/>
            <person name="Richardson P."/>
        </authorList>
    </citation>
    <scope>NUCLEOTIDE SEQUENCE [LARGE SCALE GENOMIC DNA]</scope>
    <source>
        <strain>PA1</strain>
    </source>
</reference>
<organism>
    <name type="scientific">Methylorubrum extorquens (strain PA1)</name>
    <name type="common">Methylobacterium extorquens</name>
    <dbReference type="NCBI Taxonomy" id="419610"/>
    <lineage>
        <taxon>Bacteria</taxon>
        <taxon>Pseudomonadati</taxon>
        <taxon>Pseudomonadota</taxon>
        <taxon>Alphaproteobacteria</taxon>
        <taxon>Hyphomicrobiales</taxon>
        <taxon>Methylobacteriaceae</taxon>
        <taxon>Methylorubrum</taxon>
    </lineage>
</organism>
<gene>
    <name evidence="1" type="primary">sfsA</name>
    <name type="ordered locus">Mext_0375</name>
</gene>
<name>SFSA_METEP</name>
<accession>A9VZP1</accession>
<sequence length="248" mass="26574">MRFPTPLIEGRLVRRYKRFLADVTLADGTMVTAHCANPGAMLGLNAEGFRVLLSPSTNPSRKLGYSWELVEAELPGGLQWVGINTARPNALVAEAFRENKLTPLIGYETLRPEVAYGKASRVDFLTSGGGLAPCHVEVKNCHLMRQAGLAEFPDCKAARSARHMEELAGVVTAGGRAMLIVVIQMRAGAFDVARDIDPVFDRALRMALEVGVEAYAYTCAVGPEGVAIDTPVPILTPGATLQPARTSG</sequence>